<keyword id="KW-0408">Iron</keyword>
<keyword id="KW-0479">Metal-binding</keyword>
<keyword id="KW-0503">Monooxygenase</keyword>
<keyword id="KW-0560">Oxidoreductase</keyword>
<keyword id="KW-1185">Reference proteome</keyword>
<dbReference type="EC" id="1.14.99.50" evidence="3 4"/>
<dbReference type="EMBL" id="CP000480">
    <property type="protein sequence ID" value="ABK70251.1"/>
    <property type="molecule type" value="Genomic_DNA"/>
</dbReference>
<dbReference type="EMBL" id="CP001663">
    <property type="protein sequence ID" value="AFP42519.1"/>
    <property type="molecule type" value="Genomic_DNA"/>
</dbReference>
<dbReference type="RefSeq" id="WP_011731158.1">
    <property type="nucleotide sequence ID" value="NZ_SIJM01000027.1"/>
</dbReference>
<dbReference type="RefSeq" id="YP_890468.1">
    <property type="nucleotide sequence ID" value="NC_008596.1"/>
</dbReference>
<dbReference type="SMR" id="A0R5N0"/>
<dbReference type="STRING" id="246196.MSMEG_6249"/>
<dbReference type="PaxDb" id="246196-MSMEI_6088"/>
<dbReference type="GeneID" id="93460867"/>
<dbReference type="KEGG" id="msb:LJ00_30900"/>
<dbReference type="KEGG" id="msg:MSMEI_6088"/>
<dbReference type="KEGG" id="msm:MSMEG_6249"/>
<dbReference type="PATRIC" id="fig|246196.19.peg.6088"/>
<dbReference type="eggNOG" id="COG1262">
    <property type="taxonomic scope" value="Bacteria"/>
</dbReference>
<dbReference type="OrthoDB" id="9768004at2"/>
<dbReference type="BioCyc" id="MetaCyc:MONOMER-17985"/>
<dbReference type="BRENDA" id="1.14.99.50">
    <property type="organism ID" value="3512"/>
</dbReference>
<dbReference type="UniPathway" id="UPA01014"/>
<dbReference type="Proteomes" id="UP000000757">
    <property type="component" value="Chromosome"/>
</dbReference>
<dbReference type="Proteomes" id="UP000006158">
    <property type="component" value="Chromosome"/>
</dbReference>
<dbReference type="GO" id="GO:0008198">
    <property type="term" value="F:ferrous iron binding"/>
    <property type="evidence" value="ECO:0000314"/>
    <property type="project" value="UniProtKB"/>
</dbReference>
<dbReference type="GO" id="GO:0044875">
    <property type="term" value="F:gamma-glutamyl hercynylcysteine sulfoxide synthase activity"/>
    <property type="evidence" value="ECO:0007669"/>
    <property type="project" value="UniProtKB-EC"/>
</dbReference>
<dbReference type="GO" id="GO:0016491">
    <property type="term" value="F:oxidoreductase activity"/>
    <property type="evidence" value="ECO:0000314"/>
    <property type="project" value="UniProtKB"/>
</dbReference>
<dbReference type="GO" id="GO:0052704">
    <property type="term" value="P:ergothioneine biosynthesis from histidine via gamma-glutamyl-hercynylcysteine sulfoxide"/>
    <property type="evidence" value="ECO:0000314"/>
    <property type="project" value="UniProtKB"/>
</dbReference>
<dbReference type="FunFam" id="3.90.1580.10:FF:000004">
    <property type="entry name" value="Hercynine oxygenase"/>
    <property type="match status" value="1"/>
</dbReference>
<dbReference type="Gene3D" id="1.20.120.450">
    <property type="entry name" value="dinb family like domain"/>
    <property type="match status" value="1"/>
</dbReference>
<dbReference type="Gene3D" id="3.90.1580.10">
    <property type="entry name" value="paralog of FGE (formylglycine-generating enzyme)"/>
    <property type="match status" value="1"/>
</dbReference>
<dbReference type="HAMAP" id="MF_02035">
    <property type="entry name" value="EgtB"/>
    <property type="match status" value="1"/>
</dbReference>
<dbReference type="InterPro" id="IPR016187">
    <property type="entry name" value="CTDL_fold"/>
</dbReference>
<dbReference type="InterPro" id="IPR024775">
    <property type="entry name" value="DinB-like"/>
</dbReference>
<dbReference type="InterPro" id="IPR034660">
    <property type="entry name" value="DinB/YfiT-like"/>
</dbReference>
<dbReference type="InterPro" id="IPR017806">
    <property type="entry name" value="EgtB"/>
</dbReference>
<dbReference type="InterPro" id="IPR032890">
    <property type="entry name" value="EgtB_Actinobacteria"/>
</dbReference>
<dbReference type="InterPro" id="IPR051043">
    <property type="entry name" value="Sulfatase_Mod_Factor_Kinase"/>
</dbReference>
<dbReference type="InterPro" id="IPR005532">
    <property type="entry name" value="SUMF_dom"/>
</dbReference>
<dbReference type="InterPro" id="IPR042095">
    <property type="entry name" value="SUMF_sf"/>
</dbReference>
<dbReference type="NCBIfam" id="TIGR03440">
    <property type="entry name" value="egtB_TIGR03440"/>
    <property type="match status" value="1"/>
</dbReference>
<dbReference type="PANTHER" id="PTHR23150:SF36">
    <property type="entry name" value="HERCYNINE OXYGENASE"/>
    <property type="match status" value="1"/>
</dbReference>
<dbReference type="PANTHER" id="PTHR23150">
    <property type="entry name" value="SULFATASE MODIFYING FACTOR 1, 2"/>
    <property type="match status" value="1"/>
</dbReference>
<dbReference type="Pfam" id="PF12867">
    <property type="entry name" value="DinB_2"/>
    <property type="match status" value="1"/>
</dbReference>
<dbReference type="Pfam" id="PF03781">
    <property type="entry name" value="FGE-sulfatase"/>
    <property type="match status" value="1"/>
</dbReference>
<dbReference type="SUPFAM" id="SSF56436">
    <property type="entry name" value="C-type lectin-like"/>
    <property type="match status" value="1"/>
</dbReference>
<dbReference type="SUPFAM" id="SSF109854">
    <property type="entry name" value="DinB/YfiT-like putative metalloenzymes"/>
    <property type="match status" value="1"/>
</dbReference>
<proteinExistence type="evidence at protein level"/>
<reference key="1">
    <citation type="submission" date="2006-10" db="EMBL/GenBank/DDBJ databases">
        <authorList>
            <person name="Fleischmann R.D."/>
            <person name="Dodson R.J."/>
            <person name="Haft D.H."/>
            <person name="Merkel J.S."/>
            <person name="Nelson W.C."/>
            <person name="Fraser C.M."/>
        </authorList>
    </citation>
    <scope>NUCLEOTIDE SEQUENCE [LARGE SCALE GENOMIC DNA]</scope>
    <source>
        <strain>ATCC 700084 / mc(2)155</strain>
    </source>
</reference>
<reference key="2">
    <citation type="journal article" date="2007" name="Genome Biol.">
        <title>Interrupted coding sequences in Mycobacterium smegmatis: authentic mutations or sequencing errors?</title>
        <authorList>
            <person name="Deshayes C."/>
            <person name="Perrodou E."/>
            <person name="Gallien S."/>
            <person name="Euphrasie D."/>
            <person name="Schaeffer C."/>
            <person name="Van-Dorsselaer A."/>
            <person name="Poch O."/>
            <person name="Lecompte O."/>
            <person name="Reyrat J.-M."/>
        </authorList>
    </citation>
    <scope>NUCLEOTIDE SEQUENCE [LARGE SCALE GENOMIC DNA]</scope>
    <source>
        <strain>ATCC 700084 / mc(2)155</strain>
    </source>
</reference>
<reference key="3">
    <citation type="journal article" date="2009" name="Genome Res.">
        <title>Ortho-proteogenomics: multiple proteomes investigation through orthology and a new MS-based protocol.</title>
        <authorList>
            <person name="Gallien S."/>
            <person name="Perrodou E."/>
            <person name="Carapito C."/>
            <person name="Deshayes C."/>
            <person name="Reyrat J.-M."/>
            <person name="Van Dorsselaer A."/>
            <person name="Poch O."/>
            <person name="Schaeffer C."/>
            <person name="Lecompte O."/>
        </authorList>
    </citation>
    <scope>NUCLEOTIDE SEQUENCE [LARGE SCALE GENOMIC DNA]</scope>
    <source>
        <strain>ATCC 700084 / mc(2)155</strain>
    </source>
</reference>
<reference key="4">
    <citation type="journal article" date="2010" name="J. Am. Chem. Soc.">
        <title>In vitro reconstitution of Mycobacterial ergothioneine biosynthesis.</title>
        <authorList>
            <person name="Seebeck F.P."/>
        </authorList>
    </citation>
    <scope>FUNCTION</scope>
    <scope>CATALYTIC ACTIVITY</scope>
    <scope>COFACTOR</scope>
    <scope>SUBSTRATE SPECIFICITY</scope>
    <scope>GENE NAME</scope>
    <scope>PATHWAY</scope>
</reference>
<reference key="5">
    <citation type="journal article" date="2015" name="Angew. Chem. Int. Ed.">
        <title>Structure of the sulfoxide synthase EgtB from the ergothioneine biosynthetic pathway.</title>
        <authorList>
            <person name="Goncharenko K.V."/>
            <person name="Vit A."/>
            <person name="Blankenfeldt W."/>
            <person name="Seebeck F.P."/>
        </authorList>
    </citation>
    <scope>CATALYTIC ACTIVITY</scope>
    <scope>COFACTOR</scope>
    <scope>BIOPHYSICOCHEMICAL PROPERTIES</scope>
    <scope>SUBUNIT</scope>
    <scope>REACTION MECHANISM</scope>
</reference>
<name>EGTB_MYCS2</name>
<gene>
    <name evidence="5" type="primary">egtB</name>
    <name type="ordered locus">MSMEG_6249</name>
    <name type="ordered locus">MSMEI_6088</name>
</gene>
<accession>A0R5N0</accession>
<accession>I7GG92</accession>
<feature type="chain" id="PRO_0000413647" description="Hercynine oxygenase">
    <location>
        <begin position="1"/>
        <end position="428"/>
    </location>
</feature>
<feature type="binding site" evidence="1">
    <location>
        <position position="46"/>
    </location>
    <ligand>
        <name>Fe cation</name>
        <dbReference type="ChEBI" id="CHEBI:24875"/>
    </ligand>
</feature>
<feature type="binding site" evidence="1">
    <location>
        <begin position="82"/>
        <end position="85"/>
    </location>
    <ligand>
        <name>gamma-L-glutamyl-L-cysteine</name>
        <dbReference type="ChEBI" id="CHEBI:58173"/>
    </ligand>
</feature>
<feature type="binding site" evidence="1">
    <location>
        <position position="129"/>
    </location>
    <ligand>
        <name>Fe cation</name>
        <dbReference type="ChEBI" id="CHEBI:24875"/>
    </ligand>
</feature>
<feature type="binding site" evidence="1">
    <location>
        <position position="133"/>
    </location>
    <ligand>
        <name>Fe cation</name>
        <dbReference type="ChEBI" id="CHEBI:24875"/>
    </ligand>
</feature>
<feature type="binding site" evidence="1">
    <location>
        <position position="411"/>
    </location>
    <ligand>
        <name>gamma-L-glutamyl-L-cysteine</name>
        <dbReference type="ChEBI" id="CHEBI:58173"/>
    </ligand>
</feature>
<feature type="binding site" evidence="1">
    <location>
        <position position="415"/>
    </location>
    <ligand>
        <name>gamma-L-glutamyl-L-cysteine</name>
        <dbReference type="ChEBI" id="CHEBI:58173"/>
    </ligand>
</feature>
<sequence>MIARETLADELALARERTLRLVEFDDAELHRQYNPLMSPLVWDLAHIGQQEELWLLRDGNPDRPGMLAPEVDRLYDAFEHSRASRVNLPLLPPSDARAYCATVRAKALDTLDTLPEDDPGFRFALVISHENQHDETMLQALNLREGPPLLDTGIPLPAGRPGVAGTSVLVPGGPFVLGVDALTEPHSLDNERPAHVVDIPSFRIGRVPVTNAEWREFIDDGGYDQPRWWSPRGWAHRQEAGLVAPQFWNPDGTRTRFGHIEEIPGDEPVQHVTFFEAEAYAAWAGARLPTEIEWEKACAWDPVAGARRRFPWGSAQPSAALANLGGDARRPAPVGAYPAGASAYGAEQMLGDVWEWTSSPLRPWPGFTPMIYERYSTPFFEGTTSGDYRVLRGGSWAVAPGILRPSFRNWDHPIRRQIFSGVRLAWDV</sequence>
<comment type="function">
    <text evidence="3">Catalyzes the oxidative sulfurization of hercynine (N-alpha,N-alpha,N-alpha-trimethyl-L-histidine) into hercynyl-gamma-L-glutamyl-L-cysteine sulfoxide, a step in the biosynthesis pathway of ergothioneine. Cannot use the alternative thiols cysteine, N-acetylcysteine, or glutathione instead of gamma-glutamylcysteine as substrates, and histidine is a poor sulfur acceptor substrate compared to hercynine.</text>
</comment>
<comment type="catalytic activity">
    <reaction evidence="3 4">
        <text>gamma-L-glutamyl-L-cysteine + hercynine + O2 = gamma-L-glutamyl-hercynylcysteine S-oxide + H2O</text>
        <dbReference type="Rhea" id="RHEA:42672"/>
        <dbReference type="ChEBI" id="CHEBI:15377"/>
        <dbReference type="ChEBI" id="CHEBI:15379"/>
        <dbReference type="ChEBI" id="CHEBI:15781"/>
        <dbReference type="ChEBI" id="CHEBI:58173"/>
        <dbReference type="ChEBI" id="CHEBI:82703"/>
        <dbReference type="EC" id="1.14.99.50"/>
    </reaction>
</comment>
<comment type="cofactor">
    <cofactor evidence="3 4">
        <name>Fe(2+)</name>
        <dbReference type="ChEBI" id="CHEBI:29033"/>
    </cofactor>
</comment>
<comment type="biophysicochemical properties">
    <kinetics>
        <KM evidence="4">43 uM for hercynine</KM>
        <KM evidence="4">78 uM for gamma-L-glutamyl-cysteine</KM>
        <text evidence="4">kcat is 1.2 sec(-1).</text>
    </kinetics>
</comment>
<comment type="pathway">
    <text evidence="7">Amino-acid biosynthesis; ergothioneine biosynthesis.</text>
</comment>
<comment type="subunit">
    <text evidence="4">Monomer.</text>
</comment>
<comment type="similarity">
    <text evidence="6">Belongs to the EgtB family.</text>
</comment>
<evidence type="ECO:0000250" key="1">
    <source>
        <dbReference type="UniProtKB" id="G7CFI3"/>
    </source>
</evidence>
<evidence type="ECO:0000255" key="2">
    <source>
        <dbReference type="HAMAP-Rule" id="MF_02035"/>
    </source>
</evidence>
<evidence type="ECO:0000269" key="3">
    <source>
    </source>
</evidence>
<evidence type="ECO:0000269" key="4">
    <source>
    </source>
</evidence>
<evidence type="ECO:0000303" key="5">
    <source>
    </source>
</evidence>
<evidence type="ECO:0000305" key="6"/>
<evidence type="ECO:0000305" key="7">
    <source>
    </source>
</evidence>
<organism>
    <name type="scientific">Mycolicibacterium smegmatis (strain ATCC 700084 / mc(2)155)</name>
    <name type="common">Mycobacterium smegmatis</name>
    <dbReference type="NCBI Taxonomy" id="246196"/>
    <lineage>
        <taxon>Bacteria</taxon>
        <taxon>Bacillati</taxon>
        <taxon>Actinomycetota</taxon>
        <taxon>Actinomycetes</taxon>
        <taxon>Mycobacteriales</taxon>
        <taxon>Mycobacteriaceae</taxon>
        <taxon>Mycolicibacterium</taxon>
    </lineage>
</organism>
<protein>
    <recommendedName>
        <fullName evidence="2">Hercynine oxygenase</fullName>
        <ecNumber evidence="3 4">1.14.99.50</ecNumber>
    </recommendedName>
    <alternativeName>
        <fullName evidence="2">Gamma-glutamyl hercynylcysteine S-oxide synthase</fullName>
    </alternativeName>
</protein>